<gene>
    <name evidence="1" type="primary">plsY</name>
    <name type="ordered locus">APP7_1393</name>
</gene>
<proteinExistence type="inferred from homology"/>
<comment type="function">
    <text evidence="1">Catalyzes the transfer of an acyl group from acyl-phosphate (acyl-PO(4)) to glycerol-3-phosphate (G3P) to form lysophosphatidic acid (LPA). This enzyme utilizes acyl-phosphate as fatty acyl donor, but not acyl-CoA or acyl-ACP.</text>
</comment>
<comment type="catalytic activity">
    <reaction evidence="1">
        <text>an acyl phosphate + sn-glycerol 3-phosphate = a 1-acyl-sn-glycero-3-phosphate + phosphate</text>
        <dbReference type="Rhea" id="RHEA:34075"/>
        <dbReference type="ChEBI" id="CHEBI:43474"/>
        <dbReference type="ChEBI" id="CHEBI:57597"/>
        <dbReference type="ChEBI" id="CHEBI:57970"/>
        <dbReference type="ChEBI" id="CHEBI:59918"/>
        <dbReference type="EC" id="2.3.1.275"/>
    </reaction>
</comment>
<comment type="pathway">
    <text evidence="1">Lipid metabolism; phospholipid metabolism.</text>
</comment>
<comment type="subunit">
    <text evidence="1">Probably interacts with PlsX.</text>
</comment>
<comment type="subcellular location">
    <subcellularLocation>
        <location evidence="1">Cell inner membrane</location>
        <topology evidence="1">Multi-pass membrane protein</topology>
    </subcellularLocation>
</comment>
<comment type="similarity">
    <text evidence="1">Belongs to the PlsY family.</text>
</comment>
<reference key="1">
    <citation type="submission" date="2008-06" db="EMBL/GenBank/DDBJ databases">
        <title>Genome and proteome analysis of A. pleuropneumoniae serotype 7.</title>
        <authorList>
            <person name="Linke B."/>
            <person name="Buettner F."/>
            <person name="Martinez-Arias R."/>
            <person name="Goesmann A."/>
            <person name="Baltes N."/>
            <person name="Tegetmeyer H."/>
            <person name="Singh M."/>
            <person name="Gerlach G.F."/>
        </authorList>
    </citation>
    <scope>NUCLEOTIDE SEQUENCE [LARGE SCALE GENOMIC DNA]</scope>
    <source>
        <strain>AP76</strain>
    </source>
</reference>
<dbReference type="EC" id="2.3.1.275" evidence="1"/>
<dbReference type="EMBL" id="CP001091">
    <property type="protein sequence ID" value="ACE62045.1"/>
    <property type="molecule type" value="Genomic_DNA"/>
</dbReference>
<dbReference type="RefSeq" id="WP_005598446.1">
    <property type="nucleotide sequence ID" value="NC_010939.1"/>
</dbReference>
<dbReference type="SMR" id="B3GYC1"/>
<dbReference type="GeneID" id="48599592"/>
<dbReference type="KEGG" id="apa:APP7_1393"/>
<dbReference type="HOGENOM" id="CLU_081254_0_2_6"/>
<dbReference type="UniPathway" id="UPA00085"/>
<dbReference type="Proteomes" id="UP000001226">
    <property type="component" value="Chromosome"/>
</dbReference>
<dbReference type="GO" id="GO:0005886">
    <property type="term" value="C:plasma membrane"/>
    <property type="evidence" value="ECO:0007669"/>
    <property type="project" value="UniProtKB-SubCell"/>
</dbReference>
<dbReference type="GO" id="GO:0043772">
    <property type="term" value="F:acyl-phosphate glycerol-3-phosphate acyltransferase activity"/>
    <property type="evidence" value="ECO:0007669"/>
    <property type="project" value="UniProtKB-UniRule"/>
</dbReference>
<dbReference type="GO" id="GO:0008654">
    <property type="term" value="P:phospholipid biosynthetic process"/>
    <property type="evidence" value="ECO:0007669"/>
    <property type="project" value="UniProtKB-UniRule"/>
</dbReference>
<dbReference type="HAMAP" id="MF_01043">
    <property type="entry name" value="PlsY"/>
    <property type="match status" value="1"/>
</dbReference>
<dbReference type="InterPro" id="IPR003811">
    <property type="entry name" value="G3P_acylTferase_PlsY"/>
</dbReference>
<dbReference type="NCBIfam" id="TIGR00023">
    <property type="entry name" value="glycerol-3-phosphate 1-O-acyltransferase PlsY"/>
    <property type="match status" value="1"/>
</dbReference>
<dbReference type="PANTHER" id="PTHR30309:SF0">
    <property type="entry name" value="GLYCEROL-3-PHOSPHATE ACYLTRANSFERASE-RELATED"/>
    <property type="match status" value="1"/>
</dbReference>
<dbReference type="PANTHER" id="PTHR30309">
    <property type="entry name" value="INNER MEMBRANE PROTEIN YGIH"/>
    <property type="match status" value="1"/>
</dbReference>
<dbReference type="Pfam" id="PF02660">
    <property type="entry name" value="G3P_acyltransf"/>
    <property type="match status" value="1"/>
</dbReference>
<dbReference type="SMART" id="SM01207">
    <property type="entry name" value="G3P_acyltransf"/>
    <property type="match status" value="1"/>
</dbReference>
<organism>
    <name type="scientific">Actinobacillus pleuropneumoniae serotype 7 (strain AP76)</name>
    <dbReference type="NCBI Taxonomy" id="537457"/>
    <lineage>
        <taxon>Bacteria</taxon>
        <taxon>Pseudomonadati</taxon>
        <taxon>Pseudomonadota</taxon>
        <taxon>Gammaproteobacteria</taxon>
        <taxon>Pasteurellales</taxon>
        <taxon>Pasteurellaceae</taxon>
        <taxon>Actinobacillus</taxon>
    </lineage>
</organism>
<feature type="chain" id="PRO_1000136059" description="Glycerol-3-phosphate acyltransferase">
    <location>
        <begin position="1"/>
        <end position="196"/>
    </location>
</feature>
<feature type="transmembrane region" description="Helical" evidence="1">
    <location>
        <begin position="5"/>
        <end position="25"/>
    </location>
</feature>
<feature type="transmembrane region" description="Helical" evidence="1">
    <location>
        <begin position="53"/>
        <end position="73"/>
    </location>
</feature>
<feature type="transmembrane region" description="Helical" evidence="1">
    <location>
        <begin position="80"/>
        <end position="100"/>
    </location>
</feature>
<feature type="transmembrane region" description="Helical" evidence="1">
    <location>
        <begin position="107"/>
        <end position="127"/>
    </location>
</feature>
<feature type="transmembrane region" description="Helical" evidence="1">
    <location>
        <begin position="130"/>
        <end position="150"/>
    </location>
</feature>
<feature type="transmembrane region" description="Helical" evidence="1">
    <location>
        <begin position="153"/>
        <end position="173"/>
    </location>
</feature>
<evidence type="ECO:0000255" key="1">
    <source>
        <dbReference type="HAMAP-Rule" id="MF_01043"/>
    </source>
</evidence>
<sequence length="196" mass="21531">MSITVYLLIVFAYLLGSVSSAIIFCRLAGLPDPRENGSHNPGATNVLRIGGKFSALGVLLFDILKGGLPVLLAFNFKLEPSEIGLIALAACLGHIFPLFFRFRGGKGVATAFGALLSISFAASAAGLCTWLIVFLLFGYSSLSAVITALIMPFYIWWFLPEFTFPVALVCCLLVYRHHDNIQRLWRGQEQPMWARK</sequence>
<accession>B3GYC1</accession>
<name>PLSY_ACTP7</name>
<protein>
    <recommendedName>
        <fullName evidence="1">Glycerol-3-phosphate acyltransferase</fullName>
    </recommendedName>
    <alternativeName>
        <fullName evidence="1">Acyl-PO4 G3P acyltransferase</fullName>
    </alternativeName>
    <alternativeName>
        <fullName evidence="1">Acyl-phosphate--glycerol-3-phosphate acyltransferase</fullName>
    </alternativeName>
    <alternativeName>
        <fullName evidence="1">G3P acyltransferase</fullName>
        <shortName evidence="1">GPAT</shortName>
        <ecNumber evidence="1">2.3.1.275</ecNumber>
    </alternativeName>
    <alternativeName>
        <fullName evidence="1">Lysophosphatidic acid synthase</fullName>
        <shortName evidence="1">LPA synthase</shortName>
    </alternativeName>
</protein>
<keyword id="KW-0997">Cell inner membrane</keyword>
<keyword id="KW-1003">Cell membrane</keyword>
<keyword id="KW-0444">Lipid biosynthesis</keyword>
<keyword id="KW-0443">Lipid metabolism</keyword>
<keyword id="KW-0472">Membrane</keyword>
<keyword id="KW-0594">Phospholipid biosynthesis</keyword>
<keyword id="KW-1208">Phospholipid metabolism</keyword>
<keyword id="KW-0808">Transferase</keyword>
<keyword id="KW-0812">Transmembrane</keyword>
<keyword id="KW-1133">Transmembrane helix</keyword>